<evidence type="ECO:0000255" key="1">
    <source>
        <dbReference type="HAMAP-Rule" id="MF_01338"/>
    </source>
</evidence>
<proteinExistence type="inferred from homology"/>
<organism>
    <name type="scientific">Cereibacter sphaeroides (strain ATCC 17029 / ATH 2.4.9)</name>
    <name type="common">Rhodobacter sphaeroides</name>
    <dbReference type="NCBI Taxonomy" id="349101"/>
    <lineage>
        <taxon>Bacteria</taxon>
        <taxon>Pseudomonadati</taxon>
        <taxon>Pseudomonadota</taxon>
        <taxon>Alphaproteobacteria</taxon>
        <taxon>Rhodobacterales</taxon>
        <taxon>Paracoccaceae</taxon>
        <taxon>Cereibacter</taxon>
    </lineage>
</organism>
<gene>
    <name evidence="1" type="primary">cbbL</name>
    <name type="ordered locus">Rsph17029_2941</name>
</gene>
<accession>A3PNX7</accession>
<name>RBL_CERS1</name>
<sequence>MDTKTTEIKGKERYKAGVLKYAQMGYWDGDYVPKDTDVLALFRITPQEGVDPVEAAAAVAGESSTATWTVVWTDRLTACDSYRAKAYRVEPVPGTPGQYFCYVAYDLILFEEGSIANLTASIIGNVFSFKPLKAARLEDMRFPVAYVKTYKGPPTGIVGERERLDKFGKPLLGATTKPKLGLSGKNYGRVVYEGLKGGLDFMKDDENINSQPFMHWRDRFLYVMEAVNLASAQTGEVKGHYLNITAGTMEEMYRRAEFAKSLGSVIVMVDLIIGYTAIQSISEWCRQNDMILHMHRAGHGTYTRQKNHGISFRVIAKWLRLAGVDHLHCGTAVGKLEGDPLTVQGYYNVCREPFNTVDLPRGIFFEQDWADLRKVMPVASGGIHAGQMHQLLSLFGDDVVLQFGGGTIGHPMGIQAGATANRVALEAMVLARNEGRNIDVEGPEILRAAAKWCKPLEAALDTWGNITFNYTSTDTSDFVPTASVAM</sequence>
<protein>
    <recommendedName>
        <fullName evidence="1">Ribulose bisphosphate carboxylase large chain</fullName>
        <shortName evidence="1">RuBisCO large subunit</shortName>
        <ecNumber evidence="1">4.1.1.39</ecNumber>
    </recommendedName>
</protein>
<reference key="1">
    <citation type="submission" date="2007-02" db="EMBL/GenBank/DDBJ databases">
        <title>Complete sequence of chromosome 1 of Rhodobacter sphaeroides ATCC 17029.</title>
        <authorList>
            <person name="Copeland A."/>
            <person name="Lucas S."/>
            <person name="Lapidus A."/>
            <person name="Barry K."/>
            <person name="Detter J.C."/>
            <person name="Glavina del Rio T."/>
            <person name="Hammon N."/>
            <person name="Israni S."/>
            <person name="Dalin E."/>
            <person name="Tice H."/>
            <person name="Pitluck S."/>
            <person name="Kiss H."/>
            <person name="Brettin T."/>
            <person name="Bruce D."/>
            <person name="Han C."/>
            <person name="Tapia R."/>
            <person name="Gilna P."/>
            <person name="Schmutz J."/>
            <person name="Larimer F."/>
            <person name="Land M."/>
            <person name="Hauser L."/>
            <person name="Kyrpides N."/>
            <person name="Mikhailova N."/>
            <person name="Richardson P."/>
            <person name="Mackenzie C."/>
            <person name="Choudhary M."/>
            <person name="Donohue T.J."/>
            <person name="Kaplan S."/>
        </authorList>
    </citation>
    <scope>NUCLEOTIDE SEQUENCE [LARGE SCALE GENOMIC DNA]</scope>
    <source>
        <strain>ATCC 17029 / ATH 2.4.9</strain>
    </source>
</reference>
<keyword id="KW-0113">Calvin cycle</keyword>
<keyword id="KW-0120">Carbon dioxide fixation</keyword>
<keyword id="KW-0456">Lyase</keyword>
<keyword id="KW-0460">Magnesium</keyword>
<keyword id="KW-0479">Metal-binding</keyword>
<keyword id="KW-0503">Monooxygenase</keyword>
<keyword id="KW-0560">Oxidoreductase</keyword>
<keyword id="KW-0602">Photosynthesis</keyword>
<feature type="chain" id="PRO_0000299973" description="Ribulose bisphosphate carboxylase large chain">
    <location>
        <begin position="1"/>
        <end position="486"/>
    </location>
</feature>
<feature type="active site" description="Proton acceptor" evidence="1">
    <location>
        <position position="177"/>
    </location>
</feature>
<feature type="active site" description="Proton acceptor" evidence="1">
    <location>
        <position position="295"/>
    </location>
</feature>
<feature type="binding site" description="in homodimeric partner" evidence="1">
    <location>
        <position position="125"/>
    </location>
    <ligand>
        <name>substrate</name>
    </ligand>
</feature>
<feature type="binding site" evidence="1">
    <location>
        <position position="175"/>
    </location>
    <ligand>
        <name>substrate</name>
    </ligand>
</feature>
<feature type="binding site" evidence="1">
    <location>
        <position position="179"/>
    </location>
    <ligand>
        <name>substrate</name>
    </ligand>
</feature>
<feature type="binding site" description="via carbamate group" evidence="1">
    <location>
        <position position="203"/>
    </location>
    <ligand>
        <name>Mg(2+)</name>
        <dbReference type="ChEBI" id="CHEBI:18420"/>
    </ligand>
</feature>
<feature type="binding site" evidence="1">
    <location>
        <position position="205"/>
    </location>
    <ligand>
        <name>Mg(2+)</name>
        <dbReference type="ChEBI" id="CHEBI:18420"/>
    </ligand>
</feature>
<feature type="binding site" evidence="1">
    <location>
        <position position="206"/>
    </location>
    <ligand>
        <name>Mg(2+)</name>
        <dbReference type="ChEBI" id="CHEBI:18420"/>
    </ligand>
</feature>
<feature type="binding site" evidence="1">
    <location>
        <position position="296"/>
    </location>
    <ligand>
        <name>substrate</name>
    </ligand>
</feature>
<feature type="binding site" evidence="1">
    <location>
        <position position="328"/>
    </location>
    <ligand>
        <name>substrate</name>
    </ligand>
</feature>
<feature type="binding site" evidence="1">
    <location>
        <position position="380"/>
    </location>
    <ligand>
        <name>substrate</name>
    </ligand>
</feature>
<feature type="site" description="Transition state stabilizer" evidence="1">
    <location>
        <position position="335"/>
    </location>
</feature>
<feature type="modified residue" description="N6-carboxylysine" evidence="1">
    <location>
        <position position="203"/>
    </location>
</feature>
<dbReference type="EC" id="4.1.1.39" evidence="1"/>
<dbReference type="EMBL" id="CP000577">
    <property type="protein sequence ID" value="ABN78043.1"/>
    <property type="molecule type" value="Genomic_DNA"/>
</dbReference>
<dbReference type="RefSeq" id="WP_002721829.1">
    <property type="nucleotide sequence ID" value="NC_009049.1"/>
</dbReference>
<dbReference type="SMR" id="A3PNX7"/>
<dbReference type="KEGG" id="rsh:Rsph17029_2941"/>
<dbReference type="HOGENOM" id="CLU_031450_2_0_5"/>
<dbReference type="GO" id="GO:0000287">
    <property type="term" value="F:magnesium ion binding"/>
    <property type="evidence" value="ECO:0007669"/>
    <property type="project" value="UniProtKB-UniRule"/>
</dbReference>
<dbReference type="GO" id="GO:0004497">
    <property type="term" value="F:monooxygenase activity"/>
    <property type="evidence" value="ECO:0007669"/>
    <property type="project" value="UniProtKB-KW"/>
</dbReference>
<dbReference type="GO" id="GO:0016984">
    <property type="term" value="F:ribulose-bisphosphate carboxylase activity"/>
    <property type="evidence" value="ECO:0007669"/>
    <property type="project" value="UniProtKB-UniRule"/>
</dbReference>
<dbReference type="GO" id="GO:0019253">
    <property type="term" value="P:reductive pentose-phosphate cycle"/>
    <property type="evidence" value="ECO:0007669"/>
    <property type="project" value="UniProtKB-UniRule"/>
</dbReference>
<dbReference type="CDD" id="cd08212">
    <property type="entry name" value="RuBisCO_large_I"/>
    <property type="match status" value="1"/>
</dbReference>
<dbReference type="Gene3D" id="3.20.20.110">
    <property type="entry name" value="Ribulose bisphosphate carboxylase, large subunit, C-terminal domain"/>
    <property type="match status" value="1"/>
</dbReference>
<dbReference type="Gene3D" id="3.30.70.150">
    <property type="entry name" value="RuBisCO large subunit, N-terminal domain"/>
    <property type="match status" value="1"/>
</dbReference>
<dbReference type="HAMAP" id="MF_01338">
    <property type="entry name" value="RuBisCO_L_type1"/>
    <property type="match status" value="1"/>
</dbReference>
<dbReference type="InterPro" id="IPR033966">
    <property type="entry name" value="RuBisCO"/>
</dbReference>
<dbReference type="InterPro" id="IPR020878">
    <property type="entry name" value="RuBisCo_large_chain_AS"/>
</dbReference>
<dbReference type="InterPro" id="IPR000685">
    <property type="entry name" value="RuBisCO_lsu_C"/>
</dbReference>
<dbReference type="InterPro" id="IPR036376">
    <property type="entry name" value="RuBisCO_lsu_C_sf"/>
</dbReference>
<dbReference type="InterPro" id="IPR017443">
    <property type="entry name" value="RuBisCO_lsu_fd_N"/>
</dbReference>
<dbReference type="InterPro" id="IPR036422">
    <property type="entry name" value="RuBisCO_lsu_N_sf"/>
</dbReference>
<dbReference type="InterPro" id="IPR020888">
    <property type="entry name" value="RuBisCO_lsuI"/>
</dbReference>
<dbReference type="NCBIfam" id="NF003252">
    <property type="entry name" value="PRK04208.1"/>
    <property type="match status" value="1"/>
</dbReference>
<dbReference type="PANTHER" id="PTHR42704">
    <property type="entry name" value="RIBULOSE BISPHOSPHATE CARBOXYLASE"/>
    <property type="match status" value="1"/>
</dbReference>
<dbReference type="PANTHER" id="PTHR42704:SF17">
    <property type="entry name" value="RIBULOSE BISPHOSPHATE CARBOXYLASE LARGE CHAIN"/>
    <property type="match status" value="1"/>
</dbReference>
<dbReference type="Pfam" id="PF00016">
    <property type="entry name" value="RuBisCO_large"/>
    <property type="match status" value="1"/>
</dbReference>
<dbReference type="Pfam" id="PF02788">
    <property type="entry name" value="RuBisCO_large_N"/>
    <property type="match status" value="1"/>
</dbReference>
<dbReference type="SFLD" id="SFLDG01052">
    <property type="entry name" value="RuBisCO"/>
    <property type="match status" value="1"/>
</dbReference>
<dbReference type="SFLD" id="SFLDS00014">
    <property type="entry name" value="RuBisCO"/>
    <property type="match status" value="1"/>
</dbReference>
<dbReference type="SFLD" id="SFLDG00301">
    <property type="entry name" value="RuBisCO-like_proteins"/>
    <property type="match status" value="1"/>
</dbReference>
<dbReference type="SUPFAM" id="SSF51649">
    <property type="entry name" value="RuBisCo, C-terminal domain"/>
    <property type="match status" value="1"/>
</dbReference>
<dbReference type="SUPFAM" id="SSF54966">
    <property type="entry name" value="RuBisCO, large subunit, small (N-terminal) domain"/>
    <property type="match status" value="1"/>
</dbReference>
<dbReference type="PROSITE" id="PS00157">
    <property type="entry name" value="RUBISCO_LARGE"/>
    <property type="match status" value="1"/>
</dbReference>
<comment type="function">
    <text evidence="1">RuBisCO catalyzes two reactions: the carboxylation of D-ribulose 1,5-bisphosphate, the primary event in carbon dioxide fixation, as well as the oxidative fragmentation of the pentose substrate. Both reactions occur simultaneously and in competition at the same active site.</text>
</comment>
<comment type="catalytic activity">
    <reaction evidence="1">
        <text>2 (2R)-3-phosphoglycerate + 2 H(+) = D-ribulose 1,5-bisphosphate + CO2 + H2O</text>
        <dbReference type="Rhea" id="RHEA:23124"/>
        <dbReference type="ChEBI" id="CHEBI:15377"/>
        <dbReference type="ChEBI" id="CHEBI:15378"/>
        <dbReference type="ChEBI" id="CHEBI:16526"/>
        <dbReference type="ChEBI" id="CHEBI:57870"/>
        <dbReference type="ChEBI" id="CHEBI:58272"/>
        <dbReference type="EC" id="4.1.1.39"/>
    </reaction>
</comment>
<comment type="catalytic activity">
    <reaction evidence="1">
        <text>D-ribulose 1,5-bisphosphate + O2 = 2-phosphoglycolate + (2R)-3-phosphoglycerate + 2 H(+)</text>
        <dbReference type="Rhea" id="RHEA:36631"/>
        <dbReference type="ChEBI" id="CHEBI:15378"/>
        <dbReference type="ChEBI" id="CHEBI:15379"/>
        <dbReference type="ChEBI" id="CHEBI:57870"/>
        <dbReference type="ChEBI" id="CHEBI:58033"/>
        <dbReference type="ChEBI" id="CHEBI:58272"/>
    </reaction>
</comment>
<comment type="cofactor">
    <cofactor evidence="1">
        <name>Mg(2+)</name>
        <dbReference type="ChEBI" id="CHEBI:18420"/>
    </cofactor>
    <text evidence="1">Binds 1 Mg(2+) ion per subunit.</text>
</comment>
<comment type="subunit">
    <text evidence="1">Heterohexadecamer of 8 large chains and 8 small chains.</text>
</comment>
<comment type="miscellaneous">
    <text evidence="1">The basic functional RuBisCO is composed of a large chain homodimer in a 'head-to-tail' conformation. In form I RuBisCO this homodimer is arranged in a barrel-like tetramer with the small subunits forming a tetrameric 'cap' on each end of the 'barrel'.</text>
</comment>
<comment type="similarity">
    <text evidence="1">Belongs to the RuBisCO large chain family. Type I subfamily.</text>
</comment>